<feature type="chain" id="PRO_0000161840" description="Multidrug resistance protein MdtC">
    <location>
        <begin position="1"/>
        <end position="1024"/>
    </location>
</feature>
<feature type="transmembrane region" description="Helical" evidence="1">
    <location>
        <begin position="12"/>
        <end position="34"/>
    </location>
</feature>
<feature type="transmembrane region" description="Helical" evidence="1">
    <location>
        <begin position="336"/>
        <end position="353"/>
    </location>
</feature>
<feature type="transmembrane region" description="Helical" evidence="1">
    <location>
        <begin position="360"/>
        <end position="379"/>
    </location>
</feature>
<feature type="transmembrane region" description="Helical" evidence="1">
    <location>
        <begin position="389"/>
        <end position="411"/>
    </location>
</feature>
<feature type="transmembrane region" description="Helical" evidence="1">
    <location>
        <begin position="431"/>
        <end position="453"/>
    </location>
</feature>
<feature type="transmembrane region" description="Helical" evidence="1">
    <location>
        <begin position="468"/>
        <end position="490"/>
    </location>
</feature>
<feature type="transmembrane region" description="Helical" evidence="1">
    <location>
        <begin position="853"/>
        <end position="875"/>
    </location>
</feature>
<feature type="transmembrane region" description="Helical" evidence="1">
    <location>
        <begin position="895"/>
        <end position="917"/>
    </location>
</feature>
<feature type="transmembrane region" description="Helical" evidence="1">
    <location>
        <begin position="948"/>
        <end position="970"/>
    </location>
</feature>
<feature type="transmembrane region" description="Helical" evidence="1">
    <location>
        <begin position="985"/>
        <end position="1007"/>
    </location>
</feature>
<gene>
    <name evidence="1" type="primary">mdtC</name>
    <name type="ordered locus">YPTB2815</name>
</gene>
<evidence type="ECO:0000255" key="1">
    <source>
        <dbReference type="HAMAP-Rule" id="MF_01424"/>
    </source>
</evidence>
<keyword id="KW-0997">Cell inner membrane</keyword>
<keyword id="KW-1003">Cell membrane</keyword>
<keyword id="KW-0472">Membrane</keyword>
<keyword id="KW-0812">Transmembrane</keyword>
<keyword id="KW-1133">Transmembrane helix</keyword>
<keyword id="KW-0813">Transport</keyword>
<dbReference type="EMBL" id="BX936398">
    <property type="protein sequence ID" value="CAH22053.1"/>
    <property type="molecule type" value="Genomic_DNA"/>
</dbReference>
<dbReference type="RefSeq" id="WP_011192783.1">
    <property type="nucleotide sequence ID" value="NC_006155.1"/>
</dbReference>
<dbReference type="SMR" id="Q668C5"/>
<dbReference type="KEGG" id="ypo:BZ17_3816"/>
<dbReference type="KEGG" id="yps:YPTB2815"/>
<dbReference type="PATRIC" id="fig|273123.14.peg.4005"/>
<dbReference type="Proteomes" id="UP000001011">
    <property type="component" value="Chromosome"/>
</dbReference>
<dbReference type="GO" id="GO:0005886">
    <property type="term" value="C:plasma membrane"/>
    <property type="evidence" value="ECO:0007669"/>
    <property type="project" value="UniProtKB-SubCell"/>
</dbReference>
<dbReference type="GO" id="GO:0042910">
    <property type="term" value="F:xenobiotic transmembrane transporter activity"/>
    <property type="evidence" value="ECO:0007669"/>
    <property type="project" value="TreeGrafter"/>
</dbReference>
<dbReference type="FunFam" id="1.20.1640.10:FF:000001">
    <property type="entry name" value="Efflux pump membrane transporter"/>
    <property type="match status" value="1"/>
</dbReference>
<dbReference type="FunFam" id="3.30.70.1430:FF:000001">
    <property type="entry name" value="Efflux pump membrane transporter"/>
    <property type="match status" value="1"/>
</dbReference>
<dbReference type="FunFam" id="3.30.2090.10:FF:000004">
    <property type="entry name" value="Multidrug resistance protein MdtC"/>
    <property type="match status" value="1"/>
</dbReference>
<dbReference type="Gene3D" id="3.30.70.1430">
    <property type="entry name" value="Multidrug efflux transporter AcrB pore domain"/>
    <property type="match status" value="2"/>
</dbReference>
<dbReference type="Gene3D" id="3.30.70.1440">
    <property type="entry name" value="Multidrug efflux transporter AcrB pore domain"/>
    <property type="match status" value="1"/>
</dbReference>
<dbReference type="Gene3D" id="3.30.70.1320">
    <property type="entry name" value="Multidrug efflux transporter AcrB pore domain like"/>
    <property type="match status" value="1"/>
</dbReference>
<dbReference type="Gene3D" id="3.30.2090.10">
    <property type="entry name" value="Multidrug efflux transporter AcrB TolC docking domain, DN and DC subdomains"/>
    <property type="match status" value="2"/>
</dbReference>
<dbReference type="Gene3D" id="1.20.1640.10">
    <property type="entry name" value="Multidrug efflux transporter AcrB transmembrane domain"/>
    <property type="match status" value="2"/>
</dbReference>
<dbReference type="HAMAP" id="MF_01424">
    <property type="entry name" value="MdtC"/>
    <property type="match status" value="1"/>
</dbReference>
<dbReference type="InterPro" id="IPR027463">
    <property type="entry name" value="AcrB_DN_DC_subdom"/>
</dbReference>
<dbReference type="InterPro" id="IPR001036">
    <property type="entry name" value="Acrflvin-R"/>
</dbReference>
<dbReference type="InterPro" id="IPR023931">
    <property type="entry name" value="Multidrug-R_MdtC"/>
</dbReference>
<dbReference type="NCBIfam" id="NF007905">
    <property type="entry name" value="PRK10614.1"/>
    <property type="match status" value="1"/>
</dbReference>
<dbReference type="NCBIfam" id="NF033617">
    <property type="entry name" value="RND_permease_2"/>
    <property type="match status" value="1"/>
</dbReference>
<dbReference type="PANTHER" id="PTHR32063">
    <property type="match status" value="1"/>
</dbReference>
<dbReference type="PANTHER" id="PTHR32063:SF34">
    <property type="entry name" value="MULTIDRUG RESISTANCE PROTEIN MDTC"/>
    <property type="match status" value="1"/>
</dbReference>
<dbReference type="Pfam" id="PF00873">
    <property type="entry name" value="ACR_tran"/>
    <property type="match status" value="1"/>
</dbReference>
<dbReference type="PRINTS" id="PR00702">
    <property type="entry name" value="ACRIFLAVINRP"/>
</dbReference>
<dbReference type="SUPFAM" id="SSF82693">
    <property type="entry name" value="Multidrug efflux transporter AcrB pore domain, PN1, PN2, PC1 and PC2 subdomains"/>
    <property type="match status" value="4"/>
</dbReference>
<dbReference type="SUPFAM" id="SSF82714">
    <property type="entry name" value="Multidrug efflux transporter AcrB TolC docking domain, DN and DC subdomains"/>
    <property type="match status" value="2"/>
</dbReference>
<dbReference type="SUPFAM" id="SSF82866">
    <property type="entry name" value="Multidrug efflux transporter AcrB transmembrane domain"/>
    <property type="match status" value="2"/>
</dbReference>
<sequence>MKFFALFIQRPVATTLLTLAITLSGIIGFSLLPVSPLPQVDYPVIMVSASMPGADPETMASSVATPLERALGRIAGVNEMTSTSSLGSTRIILQFDLNRDINGAARDVQAALNAAQSLLPSGMPSRPTYRKMNPSDAPIMIMTLTSDTFSQGQLYDYASTKLAQKIAQTEGVSDVTVGGSSLPAVRVELNPSALFNQGVSLDAVRQAISAANVRRPQGSVDAAETHWQVQANDEIKTAEGYRPLIVHYNNGSPVRLQDVANVIDSVQDVRNAGMSAGQPAVLLVISREPGANIIATVDRIRAELPALRASIPASIQLNIAQDRSPTIRASLDEVERSLVIAVALVILVVFIFLRSGRATLIPAVAVPVSLIGTFAAMYLCGFSLNNLSLMALTIATGFVVDDAIVVLENISRHLEAGVKPMVAALRGVREVGFTVLSMSISLVAVFIPLLLMAGLPGRLFREFAVTLSVAIGISLVISLTLTPMMCAWLLRSHPKGQQQRIRGFGKVLLAIQQGYGRSLNWALGHTRWVMVVLLSTIALNVWLYISIPKTFFPEQDTGRMMGFIQADQSISFQSMQQKLKDFMQIVGADPAVDSVTGFTGGSRTNSGSMFISLKPLSERQETAQQVITRLRGKLAKEPGANLFLSSVQDIRVGGRHSNAAYQFTLLADDLAALREWEPKVRAALAKLPQLADVNSDQQDKGAEMALTYDRETMARLGIDVSEANALLNNAFGQRQISTIYQPLNQYKVVMEVAPEYTQDVSSLDKMFVINSNGQSIPLSYFAKWQPANAPLAVNHQGLSAASTISFNLPDGGSLSEATAAVERAMTELGVPSTVRGAFAGTAQVFQETLKSQLWLIMAAIATVYIVLGILYESYVHPLTILSTLPSAGVGALLALELFDAPFSLIALIGIMLLIGIVKKNAIMMVDFALDAQRNGNISAREAIFQASLLRFRPIIMTTLAALFGALPLVLSSGDGAELRQPLGITIVGGLVVSQLLTLYTTPVIYLYFDRLRNRFSKQPLMKLE</sequence>
<proteinExistence type="inferred from homology"/>
<comment type="subunit">
    <text evidence="1">Part of a tripartite efflux system composed of MdtA, MdtB and MdtC. MdtC forms a heteromultimer with MdtB.</text>
</comment>
<comment type="subcellular location">
    <subcellularLocation>
        <location evidence="1">Cell inner membrane</location>
        <topology evidence="1">Multi-pass membrane protein</topology>
    </subcellularLocation>
</comment>
<comment type="similarity">
    <text evidence="1">Belongs to the resistance-nodulation-cell division (RND) (TC 2.A.6) family. MdtC subfamily.</text>
</comment>
<reference key="1">
    <citation type="journal article" date="2004" name="Proc. Natl. Acad. Sci. U.S.A.">
        <title>Insights into the evolution of Yersinia pestis through whole-genome comparison with Yersinia pseudotuberculosis.</title>
        <authorList>
            <person name="Chain P.S.G."/>
            <person name="Carniel E."/>
            <person name="Larimer F.W."/>
            <person name="Lamerdin J."/>
            <person name="Stoutland P.O."/>
            <person name="Regala W.M."/>
            <person name="Georgescu A.M."/>
            <person name="Vergez L.M."/>
            <person name="Land M.L."/>
            <person name="Motin V.L."/>
            <person name="Brubaker R.R."/>
            <person name="Fowler J."/>
            <person name="Hinnebusch J."/>
            <person name="Marceau M."/>
            <person name="Medigue C."/>
            <person name="Simonet M."/>
            <person name="Chenal-Francisque V."/>
            <person name="Souza B."/>
            <person name="Dacheux D."/>
            <person name="Elliott J.M."/>
            <person name="Derbise A."/>
            <person name="Hauser L.J."/>
            <person name="Garcia E."/>
        </authorList>
    </citation>
    <scope>NUCLEOTIDE SEQUENCE [LARGE SCALE GENOMIC DNA]</scope>
    <source>
        <strain>IP32953</strain>
    </source>
</reference>
<accession>Q668C5</accession>
<protein>
    <recommendedName>
        <fullName evidence="1">Multidrug resistance protein MdtC</fullName>
    </recommendedName>
    <alternativeName>
        <fullName evidence="1">Multidrug transporter MdtC</fullName>
    </alternativeName>
</protein>
<name>MDTC_YERPS</name>
<organism>
    <name type="scientific">Yersinia pseudotuberculosis serotype I (strain IP32953)</name>
    <dbReference type="NCBI Taxonomy" id="273123"/>
    <lineage>
        <taxon>Bacteria</taxon>
        <taxon>Pseudomonadati</taxon>
        <taxon>Pseudomonadota</taxon>
        <taxon>Gammaproteobacteria</taxon>
        <taxon>Enterobacterales</taxon>
        <taxon>Yersiniaceae</taxon>
        <taxon>Yersinia</taxon>
    </lineage>
</organism>